<proteinExistence type="evidence at transcript level"/>
<feature type="signal peptide" evidence="3">
    <location>
        <begin position="1"/>
        <end position="21"/>
    </location>
</feature>
<feature type="chain" id="PRO_0000434420" description="Cell wall protein phiA" evidence="3">
    <location>
        <begin position="22"/>
        <end position="184"/>
    </location>
</feature>
<feature type="glycosylation site" description="N-linked (GlcNAc...) asparagine" evidence="4">
    <location>
        <position position="58"/>
    </location>
</feature>
<dbReference type="EMBL" id="AM270315">
    <property type="protein sequence ID" value="CAK46494.1"/>
    <property type="molecule type" value="Genomic_DNA"/>
</dbReference>
<dbReference type="RefSeq" id="XP_001400808.1">
    <property type="nucleotide sequence ID" value="XM_001400771.2"/>
</dbReference>
<dbReference type="GlyCosmos" id="A2R2S8">
    <property type="glycosylation" value="1 site, No reported glycans"/>
</dbReference>
<dbReference type="EnsemblFungi" id="CAK46494">
    <property type="protein sequence ID" value="CAK46494"/>
    <property type="gene ID" value="An14g01820"/>
</dbReference>
<dbReference type="GeneID" id="4987038"/>
<dbReference type="KEGG" id="ang:An14g01820"/>
<dbReference type="VEuPathDB" id="FungiDB:An14g01820"/>
<dbReference type="HOGENOM" id="CLU_097238_0_0_1"/>
<dbReference type="Proteomes" id="UP000006706">
    <property type="component" value="Chromosome 1R"/>
</dbReference>
<dbReference type="GO" id="GO:0005576">
    <property type="term" value="C:extracellular region"/>
    <property type="evidence" value="ECO:0007669"/>
    <property type="project" value="UniProtKB-SubCell"/>
</dbReference>
<dbReference type="GO" id="GO:0030435">
    <property type="term" value="P:sporulation resulting in formation of a cellular spore"/>
    <property type="evidence" value="ECO:0007669"/>
    <property type="project" value="UniProtKB-KW"/>
</dbReference>
<organism>
    <name type="scientific">Aspergillus niger (strain ATCC MYA-4892 / CBS 513.88 / FGSC A1513)</name>
    <dbReference type="NCBI Taxonomy" id="425011"/>
    <lineage>
        <taxon>Eukaryota</taxon>
        <taxon>Fungi</taxon>
        <taxon>Dikarya</taxon>
        <taxon>Ascomycota</taxon>
        <taxon>Pezizomycotina</taxon>
        <taxon>Eurotiomycetes</taxon>
        <taxon>Eurotiomycetidae</taxon>
        <taxon>Eurotiales</taxon>
        <taxon>Aspergillaceae</taxon>
        <taxon>Aspergillus</taxon>
        <taxon>Aspergillus subgen. Circumdati</taxon>
    </lineage>
</organism>
<reference key="1">
    <citation type="journal article" date="2007" name="Nat. Biotechnol.">
        <title>Genome sequencing and analysis of the versatile cell factory Aspergillus niger CBS 513.88.</title>
        <authorList>
            <person name="Pel H.J."/>
            <person name="de Winde J.H."/>
            <person name="Archer D.B."/>
            <person name="Dyer P.S."/>
            <person name="Hofmann G."/>
            <person name="Schaap P.J."/>
            <person name="Turner G."/>
            <person name="de Vries R.P."/>
            <person name="Albang R."/>
            <person name="Albermann K."/>
            <person name="Andersen M.R."/>
            <person name="Bendtsen J.D."/>
            <person name="Benen J.A.E."/>
            <person name="van den Berg M."/>
            <person name="Breestraat S."/>
            <person name="Caddick M.X."/>
            <person name="Contreras R."/>
            <person name="Cornell M."/>
            <person name="Coutinho P.M."/>
            <person name="Danchin E.G.J."/>
            <person name="Debets A.J.M."/>
            <person name="Dekker P."/>
            <person name="van Dijck P.W.M."/>
            <person name="van Dijk A."/>
            <person name="Dijkhuizen L."/>
            <person name="Driessen A.J.M."/>
            <person name="d'Enfert C."/>
            <person name="Geysens S."/>
            <person name="Goosen C."/>
            <person name="Groot G.S.P."/>
            <person name="de Groot P.W.J."/>
            <person name="Guillemette T."/>
            <person name="Henrissat B."/>
            <person name="Herweijer M."/>
            <person name="van den Hombergh J.P.T.W."/>
            <person name="van den Hondel C.A.M.J.J."/>
            <person name="van der Heijden R.T.J.M."/>
            <person name="van der Kaaij R.M."/>
            <person name="Klis F.M."/>
            <person name="Kools H.J."/>
            <person name="Kubicek C.P."/>
            <person name="van Kuyk P.A."/>
            <person name="Lauber J."/>
            <person name="Lu X."/>
            <person name="van der Maarel M.J.E.C."/>
            <person name="Meulenberg R."/>
            <person name="Menke H."/>
            <person name="Mortimer M.A."/>
            <person name="Nielsen J."/>
            <person name="Oliver S.G."/>
            <person name="Olsthoorn M."/>
            <person name="Pal K."/>
            <person name="van Peij N.N.M.E."/>
            <person name="Ram A.F.J."/>
            <person name="Rinas U."/>
            <person name="Roubos J.A."/>
            <person name="Sagt C.M.J."/>
            <person name="Schmoll M."/>
            <person name="Sun J."/>
            <person name="Ussery D."/>
            <person name="Varga J."/>
            <person name="Vervecken W."/>
            <person name="van de Vondervoort P.J.J."/>
            <person name="Wedler H."/>
            <person name="Woesten H.A.B."/>
            <person name="Zeng A.-P."/>
            <person name="van Ooyen A.J.J."/>
            <person name="Visser J."/>
            <person name="Stam H."/>
        </authorList>
    </citation>
    <scope>NUCLEOTIDE SEQUENCE [LARGE SCALE GENOMIC DNA]</scope>
    <source>
        <strain>ATCC MYA-4892 / CBS 513.88 / FGSC A1513</strain>
    </source>
</reference>
<reference key="2">
    <citation type="journal article" date="2012" name="Fungal Genet. Biol.">
        <title>Vacuolar H(+)-ATPase plays a key role in cell wall biosynthesis of Aspergillus niger.</title>
        <authorList>
            <person name="Schachtschabel D."/>
            <person name="Arentshorst M."/>
            <person name="Lagendijk E.L."/>
            <person name="Ram A.F."/>
        </authorList>
    </citation>
    <scope>INDUCTION</scope>
</reference>
<reference key="3">
    <citation type="journal article" date="2013" name="BMC Res. Notes">
        <title>The lactic acid bacteria metabolite phenyllactic acid inhibits both radial growth and sporulation of filamentous fungi.</title>
        <authorList>
            <person name="Svanstroem A."/>
            <person name="Boveri S."/>
            <person name="Bostroem E."/>
            <person name="Melin P."/>
        </authorList>
    </citation>
    <scope>INDUCTION</scope>
    <scope>FUNCTION</scope>
</reference>
<gene>
    <name evidence="2" type="primary">phiA</name>
    <name type="ORF">An14g01820</name>
</gene>
<accession>A2R2S8</accession>
<evidence type="ECO:0000250" key="1">
    <source>
        <dbReference type="UniProtKB" id="D4AV66"/>
    </source>
</evidence>
<evidence type="ECO:0000250" key="2">
    <source>
        <dbReference type="UniProtKB" id="Q5ATP7"/>
    </source>
</evidence>
<evidence type="ECO:0000255" key="3"/>
<evidence type="ECO:0000255" key="4">
    <source>
        <dbReference type="PROSITE-ProRule" id="PRU00498"/>
    </source>
</evidence>
<evidence type="ECO:0000269" key="5">
    <source>
    </source>
</evidence>
<evidence type="ECO:0000269" key="6">
    <source>
    </source>
</evidence>
<evidence type="ECO:0000305" key="7"/>
<keyword id="KW-0134">Cell wall</keyword>
<keyword id="KW-0325">Glycoprotein</keyword>
<keyword id="KW-1185">Reference proteome</keyword>
<keyword id="KW-0964">Secreted</keyword>
<keyword id="KW-0732">Signal</keyword>
<keyword id="KW-0749">Sporulation</keyword>
<sequence length="184" mass="19180">MQLKNLIFAAATAAALPATDAATNEPFGVISIHSGSGVQYAPINAALGSIFAGLKSQNASCSNPQDQTATFFLDDGALYLYDQSATPQELYVDRSGMGQGKIGYTTGAQPAPKNGERKGWSIDANNHLQFGGKDLIACPNSIEGAWSIWADAGVAKPGYNEGCEGIAARVEVSKNPNVCSYTSN</sequence>
<name>PHIA_ASPNC</name>
<comment type="function">
    <text evidence="2 6">Cell wall protein involved in development of asexual structures such as phialide and conidium development, and thus required for spore formation (By similarity). Plays a role as a general stress protectant produced by the fungus in competition with antagonistic bacteria (PubMed:24229396).</text>
</comment>
<comment type="subcellular location">
    <subcellularLocation>
        <location evidence="1">Secreted</location>
    </subcellularLocation>
    <subcellularLocation>
        <location evidence="2">Secreted</location>
        <location evidence="2">Cell wall</location>
    </subcellularLocation>
</comment>
<comment type="induction">
    <text evidence="5 6">Expression is highly induced by the V-ATPase inhibitor bafilomycin B1 (PubMed:22222772). Expression is also increased by the anti-fungal factor phenyllactic acid (PLA) (PubMed:24229396).</text>
</comment>
<comment type="similarity">
    <text evidence="7">Belongs to the phiA family.</text>
</comment>
<protein>
    <recommendedName>
        <fullName evidence="7">Cell wall protein phiA</fullName>
    </recommendedName>
    <alternativeName>
        <fullName evidence="2">Phialide development protein A</fullName>
    </alternativeName>
</protein>